<feature type="chain" id="PRO_0000193892" description="Probable phosphoketolase">
    <location>
        <begin position="1"/>
        <end position="812"/>
    </location>
</feature>
<proteinExistence type="inferred from homology"/>
<reference key="1">
    <citation type="journal article" date="2002" name="DNA Res.">
        <title>Complete genome structure of the thermophilic cyanobacterium Thermosynechococcus elongatus BP-1.</title>
        <authorList>
            <person name="Nakamura Y."/>
            <person name="Kaneko T."/>
            <person name="Sato S."/>
            <person name="Ikeuchi M."/>
            <person name="Katoh H."/>
            <person name="Sasamoto S."/>
            <person name="Watanabe A."/>
            <person name="Iriguchi M."/>
            <person name="Kawashima K."/>
            <person name="Kimura T."/>
            <person name="Kishida Y."/>
            <person name="Kiyokawa C."/>
            <person name="Kohara M."/>
            <person name="Matsumoto M."/>
            <person name="Matsuno A."/>
            <person name="Nakazaki N."/>
            <person name="Shimpo S."/>
            <person name="Sugimoto M."/>
            <person name="Takeuchi C."/>
            <person name="Yamada M."/>
            <person name="Tabata S."/>
        </authorList>
    </citation>
    <scope>NUCLEOTIDE SEQUENCE [LARGE SCALE GENOMIC DNA]</scope>
    <source>
        <strain>NIES-2133 / IAM M-273 / BP-1</strain>
    </source>
</reference>
<sequence>MVSSPPRPTALTDDIHAFGPARATIQGQPLSDSEVEAMDAFFRACNYLAVGMIYLLDNPLLKEPLKPEHIKKRLLGHWGSSPGLAFCYLHLNRIIKKYQQEVIFLAGPGHGAPGVLAPVYLEGSYSEIYPNISEDAAGLKKFFKQFSFPGGIGSHCTPETPGSIHEGGELGYVLSHACGAAFDNPDLIVAAVVGDGEAETAPLATSWHINKFLNPARDGAVLPILNLNGYKINNPTILARIPHQDLENYFRGLGYDPCFVEGSDRPSMHQAMAATLDYCVTRIKEIQRTAREEGLTTLPRWPMIVLRTPKGWTGPAEVNGHKVEGSWRAHQVPLADVHTNPENLQLLENWLRSYRPEELFDHNGTFRPDLKALAPTGNYRMGMNPHANGGLLRKDLKMPNFREYGITFDKPGQIEVENTRPLGVFLRDVMRNNPRNFRIFGPDETTSNKLNAVYEASKKFWIAESFDEDADGGELSPEGRVIEMLSEHTLEGMLEGYLLTGRHGFFSTYEAFVHVIDSMFNQHAKWLSICNELSWRADVSSLNLLITSTVWRQDHNGFTHQDPGFLDIVCNKSAKVTRIYLPPDVNSLLSVADHCLRSKNYVNVIVSDKQLHLQYLTMDQAIIHCTKGVGIWDWASNDQGYEPDLVMASAGDIPTQEALAAIALLRQEFPELKIRYINVVDLFKLQPETEHPHGLSDRDFDSLFTLDRPIIFNFHGYPWLIHRLAYRRHNHRNLHVRGYKEKGNINTPLELAINNEIDRFSLAIDAIDRLPELQVAGAHAKEKFRNMQIAARNYAYEYGVDKPEFSHWTWPF</sequence>
<comment type="cofactor">
    <cofactor evidence="1">
        <name>thiamine diphosphate</name>
        <dbReference type="ChEBI" id="CHEBI:58937"/>
    </cofactor>
</comment>
<comment type="similarity">
    <text evidence="1">Belongs to the XFP family.</text>
</comment>
<name>PHK_THEVB</name>
<protein>
    <recommendedName>
        <fullName evidence="1">Probable phosphoketolase</fullName>
        <ecNumber evidence="1">4.1.2.-</ecNumber>
    </recommendedName>
</protein>
<accession>Q8DJN6</accession>
<keyword id="KW-0456">Lyase</keyword>
<keyword id="KW-1185">Reference proteome</keyword>
<keyword id="KW-0786">Thiamine pyrophosphate</keyword>
<evidence type="ECO:0000255" key="1">
    <source>
        <dbReference type="HAMAP-Rule" id="MF_01403"/>
    </source>
</evidence>
<gene>
    <name type="ordered locus">tll1186</name>
</gene>
<dbReference type="EC" id="4.1.2.-" evidence="1"/>
<dbReference type="EMBL" id="BA000039">
    <property type="protein sequence ID" value="BAC08738.1"/>
    <property type="molecule type" value="Genomic_DNA"/>
</dbReference>
<dbReference type="RefSeq" id="NP_681976.1">
    <property type="nucleotide sequence ID" value="NC_004113.1"/>
</dbReference>
<dbReference type="RefSeq" id="WP_011057028.1">
    <property type="nucleotide sequence ID" value="NC_004113.1"/>
</dbReference>
<dbReference type="SMR" id="Q8DJN6"/>
<dbReference type="STRING" id="197221.gene:10747781"/>
<dbReference type="EnsemblBacteria" id="BAC08738">
    <property type="protein sequence ID" value="BAC08738"/>
    <property type="gene ID" value="BAC08738"/>
</dbReference>
<dbReference type="KEGG" id="tel:tll1186"/>
<dbReference type="PATRIC" id="fig|197221.4.peg.1247"/>
<dbReference type="eggNOG" id="COG3957">
    <property type="taxonomic scope" value="Bacteria"/>
</dbReference>
<dbReference type="Proteomes" id="UP000000440">
    <property type="component" value="Chromosome"/>
</dbReference>
<dbReference type="GO" id="GO:0016832">
    <property type="term" value="F:aldehyde-lyase activity"/>
    <property type="evidence" value="ECO:0007669"/>
    <property type="project" value="UniProtKB-UniRule"/>
</dbReference>
<dbReference type="GO" id="GO:0005975">
    <property type="term" value="P:carbohydrate metabolic process"/>
    <property type="evidence" value="ECO:0007669"/>
    <property type="project" value="InterPro"/>
</dbReference>
<dbReference type="CDD" id="cd02011">
    <property type="entry name" value="TPP_PK"/>
    <property type="match status" value="1"/>
</dbReference>
<dbReference type="FunFam" id="3.40.50.970:FF:000091">
    <property type="entry name" value="Xylulose-5-phosphate/fructose-6-phosphate phosphoketolase"/>
    <property type="match status" value="1"/>
</dbReference>
<dbReference type="Gene3D" id="3.40.50.920">
    <property type="match status" value="1"/>
</dbReference>
<dbReference type="Gene3D" id="3.40.50.970">
    <property type="match status" value="2"/>
</dbReference>
<dbReference type="HAMAP" id="MF_01403">
    <property type="entry name" value="Phosphoketolase"/>
    <property type="match status" value="1"/>
</dbReference>
<dbReference type="InterPro" id="IPR023962">
    <property type="entry name" value="Phosphoketolase"/>
</dbReference>
<dbReference type="InterPro" id="IPR029061">
    <property type="entry name" value="THDP-binding"/>
</dbReference>
<dbReference type="InterPro" id="IPR009014">
    <property type="entry name" value="Transketo_C/PFOR_II"/>
</dbReference>
<dbReference type="InterPro" id="IPR005593">
    <property type="entry name" value="Xul5P/Fru6P_PKetolase"/>
</dbReference>
<dbReference type="InterPro" id="IPR018969">
    <property type="entry name" value="Xul5P/Fru6P_PKetolase_C"/>
</dbReference>
<dbReference type="InterPro" id="IPR019790">
    <property type="entry name" value="Xul5P/Fru6P_PKetolase_CS"/>
</dbReference>
<dbReference type="InterPro" id="IPR018970">
    <property type="entry name" value="Xul5P/Fru6P_PKetolase_N"/>
</dbReference>
<dbReference type="InterPro" id="IPR019789">
    <property type="entry name" value="Xul5P/Fru6P_PKetolase_ThDP_BS"/>
</dbReference>
<dbReference type="NCBIfam" id="NF003617">
    <property type="entry name" value="PRK05261.1-2"/>
    <property type="match status" value="1"/>
</dbReference>
<dbReference type="NCBIfam" id="NF003619">
    <property type="entry name" value="PRK05261.1-4"/>
    <property type="match status" value="1"/>
</dbReference>
<dbReference type="PANTHER" id="PTHR31273">
    <property type="entry name" value="PHOSPHOKETOLASE-RELATED"/>
    <property type="match status" value="1"/>
</dbReference>
<dbReference type="PANTHER" id="PTHR31273:SF0">
    <property type="entry name" value="PHOSPHOKETOLASE-RELATED"/>
    <property type="match status" value="1"/>
</dbReference>
<dbReference type="Pfam" id="PF03894">
    <property type="entry name" value="XFP"/>
    <property type="match status" value="1"/>
</dbReference>
<dbReference type="Pfam" id="PF09363">
    <property type="entry name" value="XFP_C"/>
    <property type="match status" value="1"/>
</dbReference>
<dbReference type="Pfam" id="PF09364">
    <property type="entry name" value="XFP_N"/>
    <property type="match status" value="1"/>
</dbReference>
<dbReference type="PIRSF" id="PIRSF017245">
    <property type="entry name" value="Phosphoketolase"/>
    <property type="match status" value="1"/>
</dbReference>
<dbReference type="SUPFAM" id="SSF52518">
    <property type="entry name" value="Thiamin diphosphate-binding fold (THDP-binding)"/>
    <property type="match status" value="2"/>
</dbReference>
<dbReference type="PROSITE" id="PS60002">
    <property type="entry name" value="PHOSPHOKETOLASE_1"/>
    <property type="match status" value="1"/>
</dbReference>
<dbReference type="PROSITE" id="PS60003">
    <property type="entry name" value="PHOSPHOKETOLASE_2"/>
    <property type="match status" value="1"/>
</dbReference>
<organism>
    <name type="scientific">Thermosynechococcus vestitus (strain NIES-2133 / IAM M-273 / BP-1)</name>
    <dbReference type="NCBI Taxonomy" id="197221"/>
    <lineage>
        <taxon>Bacteria</taxon>
        <taxon>Bacillati</taxon>
        <taxon>Cyanobacteriota</taxon>
        <taxon>Cyanophyceae</taxon>
        <taxon>Acaryochloridales</taxon>
        <taxon>Thermosynechococcaceae</taxon>
        <taxon>Thermosynechococcus</taxon>
    </lineage>
</organism>